<organism>
    <name type="scientific">Thermodesulfovibrio yellowstonii (strain ATCC 51303 / DSM 11347 / YP87)</name>
    <dbReference type="NCBI Taxonomy" id="289376"/>
    <lineage>
        <taxon>Bacteria</taxon>
        <taxon>Pseudomonadati</taxon>
        <taxon>Nitrospirota</taxon>
        <taxon>Thermodesulfovibrionia</taxon>
        <taxon>Thermodesulfovibrionales</taxon>
        <taxon>Thermodesulfovibrionaceae</taxon>
        <taxon>Thermodesulfovibrio</taxon>
    </lineage>
</organism>
<reference key="1">
    <citation type="submission" date="2008-08" db="EMBL/GenBank/DDBJ databases">
        <title>The complete genome sequence of Thermodesulfovibrio yellowstonii strain ATCC 51303 / DSM 11347 / YP87.</title>
        <authorList>
            <person name="Dodson R.J."/>
            <person name="Durkin A.S."/>
            <person name="Wu M."/>
            <person name="Eisen J."/>
            <person name="Sutton G."/>
        </authorList>
    </citation>
    <scope>NUCLEOTIDE SEQUENCE [LARGE SCALE GENOMIC DNA]</scope>
    <source>
        <strain>ATCC 51303 / DSM 11347 / YP87</strain>
    </source>
</reference>
<protein>
    <recommendedName>
        <fullName evidence="1">Shikimate kinase</fullName>
        <shortName evidence="1">SK</shortName>
        <ecNumber evidence="1">2.7.1.71</ecNumber>
    </recommendedName>
</protein>
<proteinExistence type="inferred from homology"/>
<comment type="function">
    <text evidence="1">Catalyzes the specific phosphorylation of the 3-hydroxyl group of shikimic acid using ATP as a cosubstrate.</text>
</comment>
<comment type="catalytic activity">
    <reaction evidence="1">
        <text>shikimate + ATP = 3-phosphoshikimate + ADP + H(+)</text>
        <dbReference type="Rhea" id="RHEA:13121"/>
        <dbReference type="ChEBI" id="CHEBI:15378"/>
        <dbReference type="ChEBI" id="CHEBI:30616"/>
        <dbReference type="ChEBI" id="CHEBI:36208"/>
        <dbReference type="ChEBI" id="CHEBI:145989"/>
        <dbReference type="ChEBI" id="CHEBI:456216"/>
        <dbReference type="EC" id="2.7.1.71"/>
    </reaction>
</comment>
<comment type="cofactor">
    <cofactor evidence="1">
        <name>Mg(2+)</name>
        <dbReference type="ChEBI" id="CHEBI:18420"/>
    </cofactor>
    <text evidence="1">Binds 1 Mg(2+) ion per subunit.</text>
</comment>
<comment type="pathway">
    <text evidence="1">Metabolic intermediate biosynthesis; chorismate biosynthesis; chorismate from D-erythrose 4-phosphate and phosphoenolpyruvate: step 5/7.</text>
</comment>
<comment type="subunit">
    <text evidence="1">Monomer.</text>
</comment>
<comment type="subcellular location">
    <subcellularLocation>
        <location evidence="1">Cytoplasm</location>
    </subcellularLocation>
</comment>
<comment type="similarity">
    <text evidence="1">Belongs to the shikimate kinase family.</text>
</comment>
<evidence type="ECO:0000255" key="1">
    <source>
        <dbReference type="HAMAP-Rule" id="MF_00109"/>
    </source>
</evidence>
<name>AROK_THEYD</name>
<keyword id="KW-0028">Amino-acid biosynthesis</keyword>
<keyword id="KW-0057">Aromatic amino acid biosynthesis</keyword>
<keyword id="KW-0067">ATP-binding</keyword>
<keyword id="KW-0963">Cytoplasm</keyword>
<keyword id="KW-0418">Kinase</keyword>
<keyword id="KW-0460">Magnesium</keyword>
<keyword id="KW-0479">Metal-binding</keyword>
<keyword id="KW-0547">Nucleotide-binding</keyword>
<keyword id="KW-1185">Reference proteome</keyword>
<keyword id="KW-0808">Transferase</keyword>
<accession>B5YHI3</accession>
<feature type="chain" id="PRO_1000094430" description="Shikimate kinase">
    <location>
        <begin position="1"/>
        <end position="173"/>
    </location>
</feature>
<feature type="binding site" evidence="1">
    <location>
        <begin position="11"/>
        <end position="16"/>
    </location>
    <ligand>
        <name>ATP</name>
        <dbReference type="ChEBI" id="CHEBI:30616"/>
    </ligand>
</feature>
<feature type="binding site" evidence="1">
    <location>
        <position position="15"/>
    </location>
    <ligand>
        <name>Mg(2+)</name>
        <dbReference type="ChEBI" id="CHEBI:18420"/>
    </ligand>
</feature>
<feature type="binding site" evidence="1">
    <location>
        <position position="33"/>
    </location>
    <ligand>
        <name>substrate</name>
    </ligand>
</feature>
<feature type="binding site" evidence="1">
    <location>
        <position position="57"/>
    </location>
    <ligand>
        <name>substrate</name>
    </ligand>
</feature>
<feature type="binding site" evidence="1">
    <location>
        <position position="79"/>
    </location>
    <ligand>
        <name>substrate</name>
    </ligand>
</feature>
<feature type="binding site" evidence="1">
    <location>
        <position position="117"/>
    </location>
    <ligand>
        <name>ATP</name>
        <dbReference type="ChEBI" id="CHEBI:30616"/>
    </ligand>
</feature>
<feature type="binding site" evidence="1">
    <location>
        <position position="136"/>
    </location>
    <ligand>
        <name>substrate</name>
    </ligand>
</feature>
<gene>
    <name evidence="1" type="primary">aroK</name>
    <name type="ordered locus">THEYE_A0154</name>
</gene>
<sequence length="173" mass="19773">MKNIVLIGFMGTGKTSVGKLVAKKLGFDFVDVDEVIEKATGMEISEIFSKFGESRFRDIEEEMIKLITPKKRQVIATGGGVVLRDENMKRLKKDGVIFCLRASENVIFERLKQTTNRPLLQVENPEERIKELLQKRMPLYEKADFCIDTEGLTPEEVAEKIIKEYERLSNGKT</sequence>
<dbReference type="EC" id="2.7.1.71" evidence="1"/>
<dbReference type="EMBL" id="CP001147">
    <property type="protein sequence ID" value="ACI21496.1"/>
    <property type="molecule type" value="Genomic_DNA"/>
</dbReference>
<dbReference type="RefSeq" id="WP_012546210.1">
    <property type="nucleotide sequence ID" value="NC_011296.1"/>
</dbReference>
<dbReference type="RefSeq" id="YP_002248005.1">
    <property type="nucleotide sequence ID" value="NC_011296.1"/>
</dbReference>
<dbReference type="SMR" id="B5YHI3"/>
<dbReference type="FunCoup" id="B5YHI3">
    <property type="interactions" value="468"/>
</dbReference>
<dbReference type="STRING" id="289376.THEYE_A0154"/>
<dbReference type="EnsemblBacteria" id="ACI21496">
    <property type="protein sequence ID" value="ACI21496"/>
    <property type="gene ID" value="THEYE_A0154"/>
</dbReference>
<dbReference type="KEGG" id="tye:THEYE_A0154"/>
<dbReference type="PATRIC" id="fig|289376.4.peg.151"/>
<dbReference type="eggNOG" id="COG0703">
    <property type="taxonomic scope" value="Bacteria"/>
</dbReference>
<dbReference type="HOGENOM" id="CLU_057607_4_0_0"/>
<dbReference type="InParanoid" id="B5YHI3"/>
<dbReference type="OrthoDB" id="9800332at2"/>
<dbReference type="UniPathway" id="UPA00053">
    <property type="reaction ID" value="UER00088"/>
</dbReference>
<dbReference type="Proteomes" id="UP000000718">
    <property type="component" value="Chromosome"/>
</dbReference>
<dbReference type="GO" id="GO:0005829">
    <property type="term" value="C:cytosol"/>
    <property type="evidence" value="ECO:0000318"/>
    <property type="project" value="GO_Central"/>
</dbReference>
<dbReference type="GO" id="GO:0005524">
    <property type="term" value="F:ATP binding"/>
    <property type="evidence" value="ECO:0007669"/>
    <property type="project" value="UniProtKB-UniRule"/>
</dbReference>
<dbReference type="GO" id="GO:0000287">
    <property type="term" value="F:magnesium ion binding"/>
    <property type="evidence" value="ECO:0007669"/>
    <property type="project" value="UniProtKB-UniRule"/>
</dbReference>
<dbReference type="GO" id="GO:0004765">
    <property type="term" value="F:shikimate kinase activity"/>
    <property type="evidence" value="ECO:0000318"/>
    <property type="project" value="GO_Central"/>
</dbReference>
<dbReference type="GO" id="GO:0008652">
    <property type="term" value="P:amino acid biosynthetic process"/>
    <property type="evidence" value="ECO:0007669"/>
    <property type="project" value="UniProtKB-KW"/>
</dbReference>
<dbReference type="GO" id="GO:0009073">
    <property type="term" value="P:aromatic amino acid family biosynthetic process"/>
    <property type="evidence" value="ECO:0007669"/>
    <property type="project" value="UniProtKB-KW"/>
</dbReference>
<dbReference type="GO" id="GO:0009423">
    <property type="term" value="P:chorismate biosynthetic process"/>
    <property type="evidence" value="ECO:0007669"/>
    <property type="project" value="UniProtKB-UniRule"/>
</dbReference>
<dbReference type="CDD" id="cd00464">
    <property type="entry name" value="SK"/>
    <property type="match status" value="1"/>
</dbReference>
<dbReference type="Gene3D" id="3.40.50.300">
    <property type="entry name" value="P-loop containing nucleotide triphosphate hydrolases"/>
    <property type="match status" value="1"/>
</dbReference>
<dbReference type="HAMAP" id="MF_00109">
    <property type="entry name" value="Shikimate_kinase"/>
    <property type="match status" value="1"/>
</dbReference>
<dbReference type="InterPro" id="IPR027417">
    <property type="entry name" value="P-loop_NTPase"/>
</dbReference>
<dbReference type="InterPro" id="IPR031322">
    <property type="entry name" value="Shikimate/glucono_kinase"/>
</dbReference>
<dbReference type="InterPro" id="IPR000623">
    <property type="entry name" value="Shikimate_kinase/TSH1"/>
</dbReference>
<dbReference type="InterPro" id="IPR023000">
    <property type="entry name" value="Shikimate_kinase_CS"/>
</dbReference>
<dbReference type="NCBIfam" id="NF010553">
    <property type="entry name" value="PRK13947.1"/>
    <property type="match status" value="1"/>
</dbReference>
<dbReference type="PANTHER" id="PTHR21087">
    <property type="entry name" value="SHIKIMATE KINASE"/>
    <property type="match status" value="1"/>
</dbReference>
<dbReference type="PANTHER" id="PTHR21087:SF16">
    <property type="entry name" value="SHIKIMATE KINASE 1, CHLOROPLASTIC"/>
    <property type="match status" value="1"/>
</dbReference>
<dbReference type="Pfam" id="PF01202">
    <property type="entry name" value="SKI"/>
    <property type="match status" value="1"/>
</dbReference>
<dbReference type="PRINTS" id="PR01100">
    <property type="entry name" value="SHIKIMTKNASE"/>
</dbReference>
<dbReference type="SUPFAM" id="SSF52540">
    <property type="entry name" value="P-loop containing nucleoside triphosphate hydrolases"/>
    <property type="match status" value="1"/>
</dbReference>
<dbReference type="PROSITE" id="PS01128">
    <property type="entry name" value="SHIKIMATE_KINASE"/>
    <property type="match status" value="1"/>
</dbReference>